<gene>
    <name evidence="1" type="primary">rpmH</name>
    <name type="ordered locus">BARBAKC583_1046</name>
</gene>
<organism>
    <name type="scientific">Bartonella bacilliformis (strain ATCC 35685 / KC583 / Herrer 020/F12,63)</name>
    <dbReference type="NCBI Taxonomy" id="360095"/>
    <lineage>
        <taxon>Bacteria</taxon>
        <taxon>Pseudomonadati</taxon>
        <taxon>Pseudomonadota</taxon>
        <taxon>Alphaproteobacteria</taxon>
        <taxon>Hyphomicrobiales</taxon>
        <taxon>Bartonellaceae</taxon>
        <taxon>Bartonella</taxon>
    </lineage>
</organism>
<dbReference type="EMBL" id="CP000524">
    <property type="protein sequence ID" value="ABM44425.1"/>
    <property type="molecule type" value="Genomic_DNA"/>
</dbReference>
<dbReference type="RefSeq" id="WP_005767604.1">
    <property type="nucleotide sequence ID" value="NC_008783.1"/>
</dbReference>
<dbReference type="SMR" id="A1UTL8"/>
<dbReference type="STRING" id="360095.BARBAKC583_1046"/>
<dbReference type="GeneID" id="4684538"/>
<dbReference type="KEGG" id="bbk:BARBAKC583_1046"/>
<dbReference type="PATRIC" id="fig|360095.6.peg.1015"/>
<dbReference type="eggNOG" id="COG0230">
    <property type="taxonomic scope" value="Bacteria"/>
</dbReference>
<dbReference type="HOGENOM" id="CLU_129938_2_0_5"/>
<dbReference type="OrthoDB" id="9804164at2"/>
<dbReference type="Proteomes" id="UP000000643">
    <property type="component" value="Chromosome"/>
</dbReference>
<dbReference type="GO" id="GO:1990904">
    <property type="term" value="C:ribonucleoprotein complex"/>
    <property type="evidence" value="ECO:0007669"/>
    <property type="project" value="UniProtKB-KW"/>
</dbReference>
<dbReference type="GO" id="GO:0005840">
    <property type="term" value="C:ribosome"/>
    <property type="evidence" value="ECO:0007669"/>
    <property type="project" value="UniProtKB-KW"/>
</dbReference>
<dbReference type="GO" id="GO:0003735">
    <property type="term" value="F:structural constituent of ribosome"/>
    <property type="evidence" value="ECO:0007669"/>
    <property type="project" value="InterPro"/>
</dbReference>
<dbReference type="GO" id="GO:0006412">
    <property type="term" value="P:translation"/>
    <property type="evidence" value="ECO:0007669"/>
    <property type="project" value="UniProtKB-UniRule"/>
</dbReference>
<dbReference type="FunFam" id="1.10.287.3980:FF:000001">
    <property type="entry name" value="Mitochondrial ribosomal protein L34"/>
    <property type="match status" value="1"/>
</dbReference>
<dbReference type="Gene3D" id="1.10.287.3980">
    <property type="match status" value="1"/>
</dbReference>
<dbReference type="HAMAP" id="MF_00391">
    <property type="entry name" value="Ribosomal_bL34"/>
    <property type="match status" value="1"/>
</dbReference>
<dbReference type="InterPro" id="IPR000271">
    <property type="entry name" value="Ribosomal_bL34"/>
</dbReference>
<dbReference type="InterPro" id="IPR020939">
    <property type="entry name" value="Ribosomal_bL34_CS"/>
</dbReference>
<dbReference type="NCBIfam" id="TIGR01030">
    <property type="entry name" value="rpmH_bact"/>
    <property type="match status" value="1"/>
</dbReference>
<dbReference type="PANTHER" id="PTHR14503:SF4">
    <property type="entry name" value="LARGE RIBOSOMAL SUBUNIT PROTEIN BL34M"/>
    <property type="match status" value="1"/>
</dbReference>
<dbReference type="PANTHER" id="PTHR14503">
    <property type="entry name" value="MITOCHONDRIAL RIBOSOMAL PROTEIN 34 FAMILY MEMBER"/>
    <property type="match status" value="1"/>
</dbReference>
<dbReference type="Pfam" id="PF00468">
    <property type="entry name" value="Ribosomal_L34"/>
    <property type="match status" value="1"/>
</dbReference>
<dbReference type="PROSITE" id="PS00784">
    <property type="entry name" value="RIBOSOMAL_L34"/>
    <property type="match status" value="1"/>
</dbReference>
<reference key="1">
    <citation type="submission" date="2006-12" db="EMBL/GenBank/DDBJ databases">
        <authorList>
            <person name="Hendrix L."/>
            <person name="Mohamoud Y."/>
            <person name="Radune D."/>
            <person name="Shvartsbeyn A."/>
            <person name="Daugherty S."/>
            <person name="Dodson R."/>
            <person name="Durkin A.S."/>
            <person name="Harkins D."/>
            <person name="Huot H."/>
            <person name="Kothari S.P."/>
            <person name="Madupu R."/>
            <person name="Li J."/>
            <person name="Nelson W.C."/>
            <person name="Shrivastava S."/>
            <person name="Giglio M.G."/>
            <person name="Haft D."/>
            <person name="Selengut J."/>
            <person name="Fraser-Ligget C."/>
            <person name="Seshadri R."/>
        </authorList>
    </citation>
    <scope>NUCLEOTIDE SEQUENCE [LARGE SCALE GENOMIC DNA]</scope>
    <source>
        <strain>ATCC 35685 / KC583 / Herrer 020/F12,63</strain>
    </source>
</reference>
<keyword id="KW-0687">Ribonucleoprotein</keyword>
<keyword id="KW-0689">Ribosomal protein</keyword>
<proteinExistence type="inferred from homology"/>
<protein>
    <recommendedName>
        <fullName evidence="1">Large ribosomal subunit protein bL34</fullName>
    </recommendedName>
    <alternativeName>
        <fullName evidence="2">50S ribosomal protein L34</fullName>
    </alternativeName>
</protein>
<evidence type="ECO:0000255" key="1">
    <source>
        <dbReference type="HAMAP-Rule" id="MF_00391"/>
    </source>
</evidence>
<evidence type="ECO:0000305" key="2"/>
<name>RL34_BARBK</name>
<sequence length="44" mass="5150">MKRTYQPSKLVRKRRHGFRARMATAGGRKVIAARRLRGRKRLSA</sequence>
<comment type="similarity">
    <text evidence="1">Belongs to the bacterial ribosomal protein bL34 family.</text>
</comment>
<accession>A1UTL8</accession>
<feature type="chain" id="PRO_1000013284" description="Large ribosomal subunit protein bL34">
    <location>
        <begin position="1"/>
        <end position="44"/>
    </location>
</feature>